<comment type="function">
    <text evidence="2 4 5 7 8">Involved in chromosome cohesion during cell cycle and in DNA repair (PubMed:21957461). Involved in the repair of double strand breaks during mitosis and meiosis (PubMed:21957461). Required for chromosome segregation during mitosis (PubMed:12808038). Central component of cohesin complex (PubMed:12808038, PubMed:12827206, PubMed:21957461). The cohesin complex is required for the cohesion of sister chromatids after DNA replication (PubMed:12827206). The cohesin complex apparently forms a large proteinaceous ring within which sister chromatids can be trapped (By similarity). At anaphase, the complex is cleaved and dissociates from chromatin, allowing sister chromatids to segregate (By similarity). Required for the localization of lab-1 to meiotic and mitotic chromosomes (PubMed:22927794).</text>
</comment>
<comment type="subunit">
    <text evidence="5">Component of the cohesin complex, composed of the smc-1 and smc-3 heterodimer attached via their SMC hinge domain, scc-1 which links them, and scc-3. Interacts with scc-1, smc-1 and tim-1.</text>
</comment>
<comment type="subcellular location">
    <subcellularLocation>
        <location evidence="5 6 7">Nucleus</location>
    </subcellularLocation>
    <subcellularLocation>
        <location evidence="5">Chromosome</location>
    </subcellularLocation>
    <text evidence="5">Has diffuse nuclear appearance at interphase during mitosis in somatic and germline tissues.</text>
</comment>
<comment type="alternative products">
    <event type="alternative splicing"/>
    <isoform>
        <id>B2FDA8-1</id>
        <name evidence="12">b</name>
        <sequence type="displayed"/>
    </isoform>
    <isoform>
        <id>B2FDA8-2</id>
        <name evidence="11">a</name>
        <sequence type="described" ref="VSP_057591"/>
    </isoform>
    <isoform>
        <id>B2FDA8-3</id>
        <name evidence="13">c</name>
        <sequence type="described" ref="VSP_057590 VSP_057591"/>
    </isoform>
</comment>
<comment type="disruption phenotype">
    <text evidence="4 5 8">RNAi-mediated knock-down is embryonic lethal and results in aberrant chromosome segregation during mitosis. RNAi-mediated knockdown at 20 degrees Celsius results in the mis-localization of lab-1 in germ line nuclei (PubMed:22927794).</text>
</comment>
<comment type="similarity">
    <text evidence="9">Belongs to the SMC family. SMC3 subfamily.</text>
</comment>
<dbReference type="EMBL" id="BX284603">
    <property type="protein sequence ID" value="CAQ48406.1"/>
    <property type="molecule type" value="Genomic_DNA"/>
</dbReference>
<dbReference type="EMBL" id="BX284603">
    <property type="protein sequence ID" value="CAB57898.4"/>
    <property type="molecule type" value="Genomic_DNA"/>
</dbReference>
<dbReference type="EMBL" id="BX284603">
    <property type="protein sequence ID" value="CCH63820.1"/>
    <property type="molecule type" value="Genomic_DNA"/>
</dbReference>
<dbReference type="RefSeq" id="NP_001129842.1">
    <property type="nucleotide sequence ID" value="NM_001136370.2"/>
</dbReference>
<dbReference type="RefSeq" id="NP_001255118.1">
    <molecule id="B2FDA8-2"/>
    <property type="nucleotide sequence ID" value="NM_001268189.4"/>
</dbReference>
<dbReference type="RefSeq" id="NP_001255119.1">
    <molecule id="B2FDA8-3"/>
    <property type="nucleotide sequence ID" value="NM_001268190.3"/>
</dbReference>
<dbReference type="SMR" id="B2FDA8"/>
<dbReference type="ComplexPortal" id="CPX-967">
    <property type="entry name" value="Nuclear mitotic cohesin complex"/>
</dbReference>
<dbReference type="FunCoup" id="B2FDA8">
    <property type="interactions" value="2878"/>
</dbReference>
<dbReference type="STRING" id="6239.Y47D3A.26b.1"/>
<dbReference type="PaxDb" id="6239-Y47D3A.26b"/>
<dbReference type="EnsemblMetazoa" id="Y47D3A.26a.1">
    <molecule id="B2FDA8-2"/>
    <property type="protein sequence ID" value="Y47D3A.26a.1"/>
    <property type="gene ID" value="WBGene00004873"/>
</dbReference>
<dbReference type="EnsemblMetazoa" id="Y47D3A.26c.1">
    <molecule id="B2FDA8-3"/>
    <property type="protein sequence ID" value="Y47D3A.26c.1"/>
    <property type="gene ID" value="WBGene00004873"/>
</dbReference>
<dbReference type="GeneID" id="176559"/>
<dbReference type="KEGG" id="cel:CELE_Y47D3A.26"/>
<dbReference type="UCSC" id="Y47D3A.26.1">
    <property type="organism name" value="c. elegans"/>
</dbReference>
<dbReference type="AGR" id="WB:WBGene00004873"/>
<dbReference type="CTD" id="176559"/>
<dbReference type="WormBase" id="Y47D3A.26a">
    <molecule id="B2FDA8-2"/>
    <property type="protein sequence ID" value="CE41472"/>
    <property type="gene ID" value="WBGene00004873"/>
    <property type="gene designation" value="smc-3"/>
</dbReference>
<dbReference type="WormBase" id="Y47D3A.26b">
    <molecule id="B2FDA8-1"/>
    <property type="protein sequence ID" value="CE37287"/>
    <property type="gene ID" value="WBGene00004873"/>
    <property type="gene designation" value="smc-3"/>
</dbReference>
<dbReference type="WormBase" id="Y47D3A.26c">
    <molecule id="B2FDA8-3"/>
    <property type="protein sequence ID" value="CE47674"/>
    <property type="gene ID" value="WBGene00004873"/>
    <property type="gene designation" value="smc-3"/>
</dbReference>
<dbReference type="eggNOG" id="KOG0964">
    <property type="taxonomic scope" value="Eukaryota"/>
</dbReference>
<dbReference type="GeneTree" id="ENSGT00940000169262"/>
<dbReference type="HOGENOM" id="CLU_001042_5_0_1"/>
<dbReference type="InParanoid" id="B2FDA8"/>
<dbReference type="OMA" id="GQKTVCA"/>
<dbReference type="OrthoDB" id="431497at2759"/>
<dbReference type="PhylomeDB" id="B2FDA8"/>
<dbReference type="Reactome" id="R-CEL-2468052">
    <property type="pathway name" value="Establishment of Sister Chromatid Cohesion"/>
</dbReference>
<dbReference type="Reactome" id="R-CEL-2470946">
    <property type="pathway name" value="Cohesin Loading onto Chromatin"/>
</dbReference>
<dbReference type="Reactome" id="R-CEL-2500257">
    <property type="pathway name" value="Resolution of Sister Chromatid Cohesion"/>
</dbReference>
<dbReference type="Reactome" id="R-CEL-3108214">
    <property type="pathway name" value="SUMOylation of DNA damage response and repair proteins"/>
</dbReference>
<dbReference type="PRO" id="PR:B2FDA8"/>
<dbReference type="Proteomes" id="UP000001940">
    <property type="component" value="Chromosome III"/>
</dbReference>
<dbReference type="Bgee" id="WBGene00004873">
    <property type="expression patterns" value="Expressed in adult organism and 4 other cell types or tissues"/>
</dbReference>
<dbReference type="GO" id="GO:0000785">
    <property type="term" value="C:chromatin"/>
    <property type="evidence" value="ECO:0000314"/>
    <property type="project" value="WormBase"/>
</dbReference>
<dbReference type="GO" id="GO:0008278">
    <property type="term" value="C:cohesin complex"/>
    <property type="evidence" value="ECO:0000314"/>
    <property type="project" value="WormBase"/>
</dbReference>
<dbReference type="GO" id="GO:0000444">
    <property type="term" value="C:MIS12/MIND type complex"/>
    <property type="evidence" value="ECO:0000314"/>
    <property type="project" value="ComplexPortal"/>
</dbReference>
<dbReference type="GO" id="GO:0030892">
    <property type="term" value="C:mitotic cohesin complex"/>
    <property type="evidence" value="ECO:0000318"/>
    <property type="project" value="GO_Central"/>
</dbReference>
<dbReference type="GO" id="GO:0005634">
    <property type="term" value="C:nucleus"/>
    <property type="evidence" value="ECO:0000314"/>
    <property type="project" value="ComplexPortal"/>
</dbReference>
<dbReference type="GO" id="GO:0005524">
    <property type="term" value="F:ATP binding"/>
    <property type="evidence" value="ECO:0007669"/>
    <property type="project" value="InterPro"/>
</dbReference>
<dbReference type="GO" id="GO:0016887">
    <property type="term" value="F:ATP hydrolysis activity"/>
    <property type="evidence" value="ECO:0007669"/>
    <property type="project" value="InterPro"/>
</dbReference>
<dbReference type="GO" id="GO:0003690">
    <property type="term" value="F:double-stranded DNA binding"/>
    <property type="evidence" value="ECO:0000318"/>
    <property type="project" value="GO_Central"/>
</dbReference>
<dbReference type="GO" id="GO:0051301">
    <property type="term" value="P:cell division"/>
    <property type="evidence" value="ECO:0007669"/>
    <property type="project" value="UniProtKB-KW"/>
</dbReference>
<dbReference type="GO" id="GO:0006281">
    <property type="term" value="P:DNA repair"/>
    <property type="evidence" value="ECO:0007669"/>
    <property type="project" value="UniProtKB-KW"/>
</dbReference>
<dbReference type="GO" id="GO:0034087">
    <property type="term" value="P:establishment of mitotic sister chromatid cohesion"/>
    <property type="evidence" value="ECO:0000314"/>
    <property type="project" value="ComplexPortal"/>
</dbReference>
<dbReference type="GO" id="GO:0007064">
    <property type="term" value="P:mitotic sister chromatid cohesion"/>
    <property type="evidence" value="ECO:0000318"/>
    <property type="project" value="GO_Central"/>
</dbReference>
<dbReference type="CDD" id="cd03272">
    <property type="entry name" value="ABC_SMC3_euk"/>
    <property type="match status" value="1"/>
</dbReference>
<dbReference type="FunFam" id="3.40.50.300:FF:000370">
    <property type="entry name" value="Structural maintenance of chromosomes 3"/>
    <property type="match status" value="1"/>
</dbReference>
<dbReference type="FunFam" id="3.40.50.300:FF:000424">
    <property type="entry name" value="Structural maintenance of chromosomes 3"/>
    <property type="match status" value="1"/>
</dbReference>
<dbReference type="FunFam" id="3.30.70.1620:FF:000013">
    <property type="entry name" value="Structural maintenance of chromosomes protein 3"/>
    <property type="match status" value="1"/>
</dbReference>
<dbReference type="Gene3D" id="1.20.1060.20">
    <property type="match status" value="1"/>
</dbReference>
<dbReference type="Gene3D" id="3.30.70.1620">
    <property type="match status" value="1"/>
</dbReference>
<dbReference type="Gene3D" id="3.40.50.300">
    <property type="entry name" value="P-loop containing nucleotide triphosphate hydrolases"/>
    <property type="match status" value="2"/>
</dbReference>
<dbReference type="InterPro" id="IPR027417">
    <property type="entry name" value="P-loop_NTPase"/>
</dbReference>
<dbReference type="InterPro" id="IPR003395">
    <property type="entry name" value="RecF/RecN/SMC_N"/>
</dbReference>
<dbReference type="InterPro" id="IPR024704">
    <property type="entry name" value="SMC"/>
</dbReference>
<dbReference type="InterPro" id="IPR041741">
    <property type="entry name" value="SMC3_ABC_euk"/>
</dbReference>
<dbReference type="InterPro" id="IPR010935">
    <property type="entry name" value="SMC_hinge"/>
</dbReference>
<dbReference type="InterPro" id="IPR036277">
    <property type="entry name" value="SMC_hinge_sf"/>
</dbReference>
<dbReference type="PANTHER" id="PTHR43977">
    <property type="entry name" value="STRUCTURAL MAINTENANCE OF CHROMOSOMES PROTEIN 3"/>
    <property type="match status" value="1"/>
</dbReference>
<dbReference type="Pfam" id="PF06470">
    <property type="entry name" value="SMC_hinge"/>
    <property type="match status" value="1"/>
</dbReference>
<dbReference type="Pfam" id="PF02463">
    <property type="entry name" value="SMC_N"/>
    <property type="match status" value="1"/>
</dbReference>
<dbReference type="PIRSF" id="PIRSF005719">
    <property type="entry name" value="SMC"/>
    <property type="match status" value="1"/>
</dbReference>
<dbReference type="SMART" id="SM00968">
    <property type="entry name" value="SMC_hinge"/>
    <property type="match status" value="1"/>
</dbReference>
<dbReference type="SUPFAM" id="SSF52540">
    <property type="entry name" value="P-loop containing nucleoside triphosphate hydrolases"/>
    <property type="match status" value="1"/>
</dbReference>
<dbReference type="SUPFAM" id="SSF144284">
    <property type="entry name" value="Sec2 N-terminal region"/>
    <property type="match status" value="1"/>
</dbReference>
<dbReference type="SUPFAM" id="SSF75553">
    <property type="entry name" value="Smc hinge domain"/>
    <property type="match status" value="1"/>
</dbReference>
<proteinExistence type="evidence at protein level"/>
<protein>
    <recommendedName>
        <fullName evidence="12">Structural maintenance of chromosomes protein 3</fullName>
    </recommendedName>
</protein>
<accession>B2FDA8</accession>
<accession>I2HAB3</accession>
<accession>Q9U2C1</accession>
<organism evidence="10">
    <name type="scientific">Caenorhabditis elegans</name>
    <dbReference type="NCBI Taxonomy" id="6239"/>
    <lineage>
        <taxon>Eukaryota</taxon>
        <taxon>Metazoa</taxon>
        <taxon>Ecdysozoa</taxon>
        <taxon>Nematoda</taxon>
        <taxon>Chromadorea</taxon>
        <taxon>Rhabditida</taxon>
        <taxon>Rhabditina</taxon>
        <taxon>Rhabditomorpha</taxon>
        <taxon>Rhabditoidea</taxon>
        <taxon>Rhabditidae</taxon>
        <taxon>Peloderinae</taxon>
        <taxon>Caenorhabditis</taxon>
    </lineage>
</organism>
<keyword id="KW-0025">Alternative splicing</keyword>
<keyword id="KW-0131">Cell cycle</keyword>
<keyword id="KW-0132">Cell division</keyword>
<keyword id="KW-0158">Chromosome</keyword>
<keyword id="KW-0175">Coiled coil</keyword>
<keyword id="KW-0227">DNA damage</keyword>
<keyword id="KW-0234">DNA repair</keyword>
<keyword id="KW-0498">Mitosis</keyword>
<keyword id="KW-0539">Nucleus</keyword>
<keyword id="KW-1185">Reference proteome</keyword>
<name>SMC3_CAEEL</name>
<reference evidence="10" key="1">
    <citation type="journal article" date="1998" name="Science">
        <title>Genome sequence of the nematode C. elegans: a platform for investigating biology.</title>
        <authorList>
            <consortium name="The C. elegans sequencing consortium"/>
        </authorList>
    </citation>
    <scope>NUCLEOTIDE SEQUENCE [LARGE SCALE GENOMIC DNA]</scope>
    <source>
        <strain evidence="10">Bristol N2</strain>
    </source>
</reference>
<reference evidence="9" key="2">
    <citation type="journal article" date="2003" name="Mol. Biol. Cell">
        <title>Distinct developmental function of two Caenorhabditis elegans homologs of the cohesin subunit Scc1/Rad21.</title>
        <authorList>
            <person name="Mito Y."/>
            <person name="Sugimoto A."/>
            <person name="Yamamoto M."/>
        </authorList>
    </citation>
    <scope>FUNCTION</scope>
    <scope>DISRUPTION PHENOTYPE</scope>
</reference>
<reference evidence="9" key="3">
    <citation type="journal article" date="2003" name="Nature">
        <title>Chromosome cohesion is regulated by a clock gene paralogue TIM-1.</title>
        <authorList>
            <person name="Chan R.C."/>
            <person name="Chan A."/>
            <person name="Jeon M."/>
            <person name="Wu T.F."/>
            <person name="Pasqualone D."/>
            <person name="Rougvie A.E."/>
            <person name="Meyer B.J."/>
        </authorList>
    </citation>
    <scope>FUNCTION</scope>
    <scope>IDENTIFICATION BY MASS SPECTROMETRY</scope>
    <scope>IDENTIFICATION IN THE COHESIN COMPLEX</scope>
    <scope>INTERACTION WITH SMC-1; SCC-1 AND TIM-1</scope>
    <scope>SUBCELLULAR LOCATION</scope>
    <scope>DISRUPTION PHENOTYPE</scope>
</reference>
<reference evidence="9" key="4">
    <citation type="journal article" date="2011" name="Curr. Biol.">
        <title>Loading of meiotic cohesin by SCC-2 is required for early processing of DSBs and for the DNA damage checkpoint.</title>
        <authorList>
            <person name="Lightfoot J."/>
            <person name="Testori S."/>
            <person name="Barroso C."/>
            <person name="Martinez-Perez E."/>
        </authorList>
    </citation>
    <scope>SUBCELLULAR LOCATION</scope>
</reference>
<reference evidence="9" key="5">
    <citation type="journal article" date="2011" name="PLoS ONE">
        <title>A new thermosensitive smc-3 allele reveals involvement of cohesin in homologous recombination in C. elegans.</title>
        <authorList>
            <person name="Baudrimont A."/>
            <person name="Penkner A."/>
            <person name="Woglar A."/>
            <person name="Mamnun Y.M."/>
            <person name="Hulek M."/>
            <person name="Struck C."/>
            <person name="Schnabel R."/>
            <person name="Loidl J."/>
            <person name="Jantsch V."/>
        </authorList>
    </citation>
    <scope>FUNCTION</scope>
    <scope>SUBCELLULAR LOCATION</scope>
    <scope>MUTAGENESIS OF LEU-1081</scope>
</reference>
<reference key="6">
    <citation type="journal article" date="2012" name="PLoS Biol.">
        <title>LAB-1 targets PP1 and restricts Aurora B kinase upon entrance into meiosis to promote sister chromatid cohesion.</title>
        <authorList>
            <person name="Tzur Y.B."/>
            <person name="Egydio de Carvalho C."/>
            <person name="Nadarajan S."/>
            <person name="Van Bostelen I."/>
            <person name="Gu Y."/>
            <person name="Chu D.S."/>
            <person name="Cheeseman I.M."/>
            <person name="Colaiacovo M.P."/>
        </authorList>
    </citation>
    <scope>FUNCTION</scope>
    <scope>DISRUPTION PHENOTYPE</scope>
</reference>
<evidence type="ECO:0000250" key="1">
    <source>
        <dbReference type="UniProtKB" id="P47037"/>
    </source>
</evidence>
<evidence type="ECO:0000250" key="2">
    <source>
        <dbReference type="UniProtKB" id="Q9UQE7"/>
    </source>
</evidence>
<evidence type="ECO:0000255" key="3"/>
<evidence type="ECO:0000269" key="4">
    <source>
    </source>
</evidence>
<evidence type="ECO:0000269" key="5">
    <source>
    </source>
</evidence>
<evidence type="ECO:0000269" key="6">
    <source>
    </source>
</evidence>
<evidence type="ECO:0000269" key="7">
    <source>
    </source>
</evidence>
<evidence type="ECO:0000269" key="8">
    <source>
    </source>
</evidence>
<evidence type="ECO:0000305" key="9"/>
<evidence type="ECO:0000312" key="10">
    <source>
        <dbReference type="Proteomes" id="UP000001940"/>
    </source>
</evidence>
<evidence type="ECO:0000312" key="11">
    <source>
        <dbReference type="WormBase" id="Y47D3A.26a"/>
    </source>
</evidence>
<evidence type="ECO:0000312" key="12">
    <source>
        <dbReference type="WormBase" id="Y47D3A.26b"/>
    </source>
</evidence>
<evidence type="ECO:0000312" key="13">
    <source>
        <dbReference type="WormBase" id="Y47D3A.26c"/>
    </source>
</evidence>
<feature type="chain" id="PRO_0000432835" description="Structural maintenance of chromosomes protein 3" evidence="9">
    <location>
        <begin position="1"/>
        <end position="1261"/>
    </location>
</feature>
<feature type="domain" description="SMC hinge">
    <location>
        <begin position="534"/>
        <end position="645"/>
    </location>
</feature>
<feature type="coiled-coil region" evidence="3">
    <location>
        <begin position="188"/>
        <end position="332"/>
    </location>
</feature>
<feature type="coiled-coil region" evidence="3">
    <location>
        <begin position="406"/>
        <end position="450"/>
    </location>
</feature>
<feature type="coiled-coil region" evidence="3">
    <location>
        <begin position="677"/>
        <end position="826"/>
    </location>
</feature>
<feature type="coiled-coil region" evidence="3">
    <location>
        <begin position="857"/>
        <end position="930"/>
    </location>
</feature>
<feature type="coiled-coil region" evidence="3">
    <location>
        <begin position="1023"/>
        <end position="1085"/>
    </location>
</feature>
<feature type="short sequence motif" description="DA-box" evidence="1">
    <location>
        <begin position="1159"/>
        <end position="1193"/>
    </location>
</feature>
<feature type="splice variant" id="VSP_057590" description="In isoform c." evidence="9">
    <location>
        <begin position="1"/>
        <end position="876"/>
    </location>
</feature>
<feature type="splice variant" id="VSP_057591" description="In isoform a and isoform c." evidence="9">
    <location>
        <begin position="947"/>
        <end position="1002"/>
    </location>
</feature>
<feature type="mutagenesis site" description="In t2553; Thermosensitive mutant with reduced stability of the cohesin complex on chromosomes and defective DNA double-stranded break repair." evidence="7">
    <original>L</original>
    <variation>F</variation>
    <location>
        <position position="1081"/>
    </location>
</feature>
<gene>
    <name evidence="12" type="primary">smc-3</name>
    <name evidence="12" type="ORF">Y47D3A.26</name>
</gene>
<sequence length="1261" mass="146517">MKIKEVRITGFRSYKDNTNVSGFSPRSNVVVGRNGSGKSNFFHAIQFVLSDEYAHLKEEQRLGLLHESTGPKVAHARVEITFDNSEKRLMAFENSEVKIVRQVGKKKDQYYIDNKMVPRAEVVNLMESAGFSRSNPYYIVKQGKINELATSPDAYKLKLLREVAGTRVYDERKEESLKILKETKMKTEKIQGLLKYIDERLQTLENEKEDLKEYQKLDKTKRSVEYTMYDNTNKEAIKEKTKLDEQKVELNQKDNNVKSQLNDVIAEMAKLKTDKKKLESLGRGLREDKETLQAEETKMVEEKMTLKLEIDSLNEENTRERQGRQNAEHSLQGVGDEIFKNEEELDTIKPEYAKLLEEESRLKTDIRIDESRAKEILAKQGQRSQFSSVDDRDKFLRNEIRRISGLIADNKEREETIQKELADVEREDEKLNNEIQSISRTIDENRYEMDTFAAKSTSLKQEYDAAYVAQQTAAREEKAIRDKIGNTEQDISAANDQLRRIVARPVYNGITGVRKVIEEFKHDNRNGQHDDVINGYYGTVIELAEVPDMFRTAVEVIAQNRLFYHVVETDRIATKILRKFNEMQLPGEINFFPMNRVSAPRQRDLSNNSNARPMSDVIDYEVQYDKVFKSITANVIIVRTLDQAARDLRNEGFDVVSVDGDQMSKKGVMTGGFIDKKRSKLELHTQKDRFTKELAELQKSLAEAEKMVRERTQEAEKIRNRMQQHENQIGDFHRKHRELTEAKNAISQQFYMVTSTKEPKKDQLLGIKNHLRELLAQKENFEQEIGSNMSSQLTSDEEQTVKKLRKKVDEMTKQLATVSRRRMDLMHRKNAIENLLTKKLYKTKESLTARVDDISDNERRHKLENANAQLTSLLTRMESTRKQLATAISELQDYETKEKALQINIDNVLEQQRDLEKQQADFQLQYDKITAKEDEVKQKREDSLKKLILSRYSIKTRKNQFSYEISDSEEVGAKREPIEHRKLKISTFCLEYRAKLEKVHSNMRLLGALPTDTFSKWQNVKPRELEKKLLECVNELKKYENVNKKALDQYMTASSQKEELTKRMAEQKKSEDSIEELLKVLENRKYEAIDLTFKQVKKNFEQVFKQLVPHGRGKMQMRAREQRDDEEGINSVELYEGISVLVSFVSDDGDSETREMTQLSGGQKSLVALAIIFSIQKCDPAPFYLFDEIDAALDAQHRKSVADMIQSLSDQAQFVTTTFRPELLATAEKFYGVRFRNKVSHIDSVTREQAYDFVEDDTTHG</sequence>